<comment type="function">
    <text evidence="1 2">Chemotactic for neutrophil granulocytes. Signals through binding and activation of its receptors (CXCR1 and CXCR2). In addition to its chemotactic and angiogenic properties, it has strong antibacterial activity against Gram-positive and Gram-negative bacteria (90-fold-higher when compared to CXCL5 and CXCL7) (By similarity).</text>
</comment>
<comment type="subcellular location">
    <subcellularLocation>
        <location>Secreted</location>
    </subcellularLocation>
</comment>
<comment type="developmental stage">
    <text>Expressed in high amounts from endometria of day 18-21 pregnant cows.</text>
</comment>
<comment type="induction">
    <text>By interferon tau and phorbol ester.</text>
</comment>
<comment type="similarity">
    <text evidence="3">Belongs to the intercrine alpha (chemokine CxC) family.</text>
</comment>
<gene>
    <name type="primary">CXCL6</name>
    <name type="synonym">GCP2</name>
    <name type="synonym">SCYB6</name>
</gene>
<accession>P80221</accession>
<accession>A5PJH0</accession>
<accession>Q9GKP5</accession>
<protein>
    <recommendedName>
        <fullName>C-X-C motif chemokine 6</fullName>
    </recommendedName>
    <alternativeName>
        <fullName>Granulocyte chemotactic protein 2</fullName>
        <shortName>GCP-2</shortName>
    </alternativeName>
    <alternativeName>
        <fullName>Small-inducible cytokine B6</fullName>
    </alternativeName>
</protein>
<sequence>MRLLSSRAARVSGPSGSLCALLALLLLTPPGPLASAGPVAAVVRELRCVCLTTTPGIHPKTVSDLQVIAAGPQCSKVEVIATLKNGREVCLDPEAPLIKKIVQKILDSGKNN</sequence>
<reference key="1">
    <citation type="submission" date="1999-05" db="EMBL/GenBank/DDBJ databases">
        <title>The bovine granulocyte chemotactic protein-2 cDNA.</title>
        <authorList>
            <person name="Austin K.J."/>
            <person name="Perry D.J."/>
            <person name="Hansen T.R."/>
        </authorList>
    </citation>
    <scope>NUCLEOTIDE SEQUENCE [MRNA]</scope>
    <source>
        <tissue>Endometrium</tissue>
    </source>
</reference>
<reference key="2">
    <citation type="submission" date="2007-06" db="EMBL/GenBank/DDBJ databases">
        <authorList>
            <consortium name="NIH - Mammalian Gene Collection (MGC) project"/>
        </authorList>
    </citation>
    <scope>NUCLEOTIDE SEQUENCE [LARGE SCALE MRNA]</scope>
    <source>
        <strain>Hereford</strain>
        <tissue>Thymus</tissue>
    </source>
</reference>
<reference key="3">
    <citation type="journal article" date="1993" name="Biochemistry">
        <title>Human and bovine granulocyte chemotactic protein-2: complete amino acid sequence and functional characterization as chemokines.</title>
        <authorList>
            <person name="Proost P."/>
            <person name="Wuyts A."/>
            <person name="Conings R."/>
            <person name="Lenaerts J.-P."/>
            <person name="Billiau A."/>
            <person name="Opdenakker G."/>
            <person name="van Damme J."/>
        </authorList>
    </citation>
    <scope>PROTEIN SEQUENCE OF 37-111</scope>
    <scope>FUNCTION</scope>
    <scope>PROTEOLYTIC PROCESSING OF N-TERMINAL</scope>
    <source>
        <tissue>Kidney</tissue>
    </source>
</reference>
<keyword id="KW-0044">Antibiotic</keyword>
<keyword id="KW-0929">Antimicrobial</keyword>
<keyword id="KW-0145">Chemotaxis</keyword>
<keyword id="KW-0202">Cytokine</keyword>
<keyword id="KW-0903">Direct protein sequencing</keyword>
<keyword id="KW-1015">Disulfide bond</keyword>
<keyword id="KW-0358">Heparin-binding</keyword>
<keyword id="KW-1185">Reference proteome</keyword>
<keyword id="KW-0964">Secreted</keyword>
<keyword id="KW-0732">Signal</keyword>
<proteinExistence type="evidence at protein level"/>
<organism>
    <name type="scientific">Bos taurus</name>
    <name type="common">Bovine</name>
    <dbReference type="NCBI Taxonomy" id="9913"/>
    <lineage>
        <taxon>Eukaryota</taxon>
        <taxon>Metazoa</taxon>
        <taxon>Chordata</taxon>
        <taxon>Craniata</taxon>
        <taxon>Vertebrata</taxon>
        <taxon>Euteleostomi</taxon>
        <taxon>Mammalia</taxon>
        <taxon>Eutheria</taxon>
        <taxon>Laurasiatheria</taxon>
        <taxon>Artiodactyla</taxon>
        <taxon>Ruminantia</taxon>
        <taxon>Pecora</taxon>
        <taxon>Bovidae</taxon>
        <taxon>Bovinae</taxon>
        <taxon>Bos</taxon>
    </lineage>
</organism>
<dbReference type="EMBL" id="AF149249">
    <property type="protein sequence ID" value="AAG35212.1"/>
    <property type="molecule type" value="mRNA"/>
</dbReference>
<dbReference type="EMBL" id="BC142108">
    <property type="protein sequence ID" value="AAI42109.1"/>
    <property type="molecule type" value="mRNA"/>
</dbReference>
<dbReference type="PIR" id="B54188">
    <property type="entry name" value="B54188"/>
</dbReference>
<dbReference type="RefSeq" id="NP_776725.1">
    <property type="nucleotide sequence ID" value="NM_174300.2"/>
</dbReference>
<dbReference type="SMR" id="P80221"/>
<dbReference type="FunCoup" id="P80221">
    <property type="interactions" value="404"/>
</dbReference>
<dbReference type="STRING" id="9913.ENSBTAP00000012939"/>
<dbReference type="PaxDb" id="9913-ENSBTAP00000012939"/>
<dbReference type="Ensembl" id="ENSBTAT00000012939.5">
    <property type="protein sequence ID" value="ENSBTAP00000012939.3"/>
    <property type="gene ID" value="ENSBTAG00000009812.6"/>
</dbReference>
<dbReference type="GeneID" id="281735"/>
<dbReference type="KEGG" id="bta:281735"/>
<dbReference type="CTD" id="6374"/>
<dbReference type="VEuPathDB" id="HostDB:ENSBTAG00000009812"/>
<dbReference type="eggNOG" id="ENOG502S7MM">
    <property type="taxonomic scope" value="Eukaryota"/>
</dbReference>
<dbReference type="GeneTree" id="ENSGT00940000162749"/>
<dbReference type="HOGENOM" id="CLU_143902_1_0_1"/>
<dbReference type="InParanoid" id="P80221"/>
<dbReference type="OMA" id="HPKMISN"/>
<dbReference type="OrthoDB" id="8872899at2759"/>
<dbReference type="TreeFam" id="TF333433"/>
<dbReference type="Reactome" id="R-BTA-380108">
    <property type="pathway name" value="Chemokine receptors bind chemokines"/>
</dbReference>
<dbReference type="Reactome" id="R-BTA-418594">
    <property type="pathway name" value="G alpha (i) signalling events"/>
</dbReference>
<dbReference type="Proteomes" id="UP000009136">
    <property type="component" value="Chromosome 6"/>
</dbReference>
<dbReference type="Bgee" id="ENSBTAG00000009812">
    <property type="expression patterns" value="Expressed in milk and 87 other cell types or tissues"/>
</dbReference>
<dbReference type="GO" id="GO:0005615">
    <property type="term" value="C:extracellular space"/>
    <property type="evidence" value="ECO:0000318"/>
    <property type="project" value="GO_Central"/>
</dbReference>
<dbReference type="GO" id="GO:0008009">
    <property type="term" value="F:chemokine activity"/>
    <property type="evidence" value="ECO:0000314"/>
    <property type="project" value="UniProtKB"/>
</dbReference>
<dbReference type="GO" id="GO:0045236">
    <property type="term" value="F:CXCR chemokine receptor binding"/>
    <property type="evidence" value="ECO:0000318"/>
    <property type="project" value="GO_Central"/>
</dbReference>
<dbReference type="GO" id="GO:0008201">
    <property type="term" value="F:heparin binding"/>
    <property type="evidence" value="ECO:0007669"/>
    <property type="project" value="UniProtKB-KW"/>
</dbReference>
<dbReference type="GO" id="GO:0061844">
    <property type="term" value="P:antimicrobial humoral immune response mediated by antimicrobial peptide"/>
    <property type="evidence" value="ECO:0000314"/>
    <property type="project" value="UniProtKB"/>
</dbReference>
<dbReference type="GO" id="GO:0071222">
    <property type="term" value="P:cellular response to lipopolysaccharide"/>
    <property type="evidence" value="ECO:0000314"/>
    <property type="project" value="UniProtKB"/>
</dbReference>
<dbReference type="GO" id="GO:0042742">
    <property type="term" value="P:defense response to bacterium"/>
    <property type="evidence" value="ECO:0007669"/>
    <property type="project" value="UniProtKB-KW"/>
</dbReference>
<dbReference type="GO" id="GO:0006954">
    <property type="term" value="P:inflammatory response"/>
    <property type="evidence" value="ECO:0000318"/>
    <property type="project" value="GO_Central"/>
</dbReference>
<dbReference type="GO" id="GO:0042119">
    <property type="term" value="P:neutrophil activation"/>
    <property type="evidence" value="ECO:0000314"/>
    <property type="project" value="UniProtKB"/>
</dbReference>
<dbReference type="GO" id="GO:0030593">
    <property type="term" value="P:neutrophil chemotaxis"/>
    <property type="evidence" value="ECO:0000314"/>
    <property type="project" value="UniProtKB"/>
</dbReference>
<dbReference type="CDD" id="cd00273">
    <property type="entry name" value="Chemokine_CXC"/>
    <property type="match status" value="1"/>
</dbReference>
<dbReference type="FunFam" id="2.40.50.40:FF:000004">
    <property type="entry name" value="C-X-C motif chemokine"/>
    <property type="match status" value="1"/>
</dbReference>
<dbReference type="Gene3D" id="2.40.50.40">
    <property type="match status" value="1"/>
</dbReference>
<dbReference type="InterPro" id="IPR039809">
    <property type="entry name" value="Chemokine_b/g/d"/>
</dbReference>
<dbReference type="InterPro" id="IPR001089">
    <property type="entry name" value="Chemokine_CXC"/>
</dbReference>
<dbReference type="InterPro" id="IPR018048">
    <property type="entry name" value="Chemokine_CXC_CS"/>
</dbReference>
<dbReference type="InterPro" id="IPR001811">
    <property type="entry name" value="Chemokine_IL8-like_dom"/>
</dbReference>
<dbReference type="InterPro" id="IPR033899">
    <property type="entry name" value="CXC_Chemokine_domain"/>
</dbReference>
<dbReference type="InterPro" id="IPR036048">
    <property type="entry name" value="Interleukin_8-like_sf"/>
</dbReference>
<dbReference type="PANTHER" id="PTHR12015:SF201">
    <property type="entry name" value="C-X-C MOTIF CHEMOKINE 6"/>
    <property type="match status" value="1"/>
</dbReference>
<dbReference type="PANTHER" id="PTHR12015">
    <property type="entry name" value="SMALL INDUCIBLE CYTOKINE A"/>
    <property type="match status" value="1"/>
</dbReference>
<dbReference type="Pfam" id="PF00048">
    <property type="entry name" value="IL8"/>
    <property type="match status" value="1"/>
</dbReference>
<dbReference type="PRINTS" id="PR00436">
    <property type="entry name" value="INTERLEUKIN8"/>
</dbReference>
<dbReference type="PRINTS" id="PR00437">
    <property type="entry name" value="SMALLCYTKCXC"/>
</dbReference>
<dbReference type="SMART" id="SM00199">
    <property type="entry name" value="SCY"/>
    <property type="match status" value="1"/>
</dbReference>
<dbReference type="SUPFAM" id="SSF54117">
    <property type="entry name" value="Interleukin 8-like chemokines"/>
    <property type="match status" value="1"/>
</dbReference>
<dbReference type="PROSITE" id="PS00471">
    <property type="entry name" value="SMALL_CYTOKINES_CXC"/>
    <property type="match status" value="1"/>
</dbReference>
<feature type="signal peptide" evidence="2">
    <location>
        <begin position="1"/>
        <end position="36"/>
    </location>
</feature>
<feature type="chain" id="PRO_0000005082" description="C-X-C motif chemokine 6">
    <location>
        <begin position="37"/>
        <end position="112"/>
    </location>
</feature>
<feature type="disulfide bond" evidence="1">
    <location>
        <begin position="48"/>
        <end position="74"/>
    </location>
</feature>
<feature type="disulfide bond" evidence="1">
    <location>
        <begin position="50"/>
        <end position="90"/>
    </location>
</feature>
<feature type="sequence variant" description="In N-terminal processing variant.">
    <location>
        <begin position="37"/>
        <end position="45"/>
    </location>
</feature>
<feature type="sequence variant" description="In N-terminal processing variant.">
    <location>
        <begin position="37"/>
        <end position="44"/>
    </location>
</feature>
<feature type="sequence variant" description="In N-terminal processing variant.">
    <location>
        <begin position="37"/>
        <end position="43"/>
    </location>
</feature>
<feature type="sequence variant" description="In N-terminal processing variant.">
    <location>
        <begin position="37"/>
        <end position="38"/>
    </location>
</feature>
<name>CXCL6_BOVIN</name>
<evidence type="ECO:0000250" key="1"/>
<evidence type="ECO:0000269" key="2">
    <source>
    </source>
</evidence>
<evidence type="ECO:0000305" key="3"/>